<proteinExistence type="predicted"/>
<organism>
    <name type="scientific">Haemophilus influenzae (strain ATCC 51907 / DSM 11121 / KW20 / Rd)</name>
    <dbReference type="NCBI Taxonomy" id="71421"/>
    <lineage>
        <taxon>Bacteria</taxon>
        <taxon>Pseudomonadati</taxon>
        <taxon>Pseudomonadota</taxon>
        <taxon>Gammaproteobacteria</taxon>
        <taxon>Pasteurellales</taxon>
        <taxon>Pasteurellaceae</taxon>
        <taxon>Haemophilus</taxon>
    </lineage>
</organism>
<keyword id="KW-1185">Reference proteome</keyword>
<name>Y156A_HAEIN</name>
<sequence length="59" mass="7066">MVGFSSCRVGFSPPTNNREIFWWAKAHPTLSTHHSMRTSFYFRSNHYDDFMQKDSRTYT</sequence>
<feature type="chain" id="PRO_0000078088" description="Uncharacterized protein HI_1564.1">
    <location>
        <begin position="1"/>
        <end position="59"/>
    </location>
</feature>
<protein>
    <recommendedName>
        <fullName>Uncharacterized protein HI_1564.1</fullName>
    </recommendedName>
</protein>
<accession>O86243</accession>
<dbReference type="EMBL" id="L42023">
    <property type="protein sequence ID" value="AAC23222.1"/>
    <property type="molecule type" value="Genomic_DNA"/>
</dbReference>
<dbReference type="STRING" id="71421.HI_1564.1"/>
<dbReference type="EnsemblBacteria" id="AAC23222">
    <property type="protein sequence ID" value="AAC23222"/>
    <property type="gene ID" value="HI_1564.1"/>
</dbReference>
<dbReference type="KEGG" id="hin:HI_1564.1"/>
<dbReference type="HOGENOM" id="CLU_2954082_0_0_6"/>
<dbReference type="Proteomes" id="UP000000579">
    <property type="component" value="Chromosome"/>
</dbReference>
<reference key="1">
    <citation type="journal article" date="1995" name="Science">
        <title>Whole-genome random sequencing and assembly of Haemophilus influenzae Rd.</title>
        <authorList>
            <person name="Fleischmann R.D."/>
            <person name="Adams M.D."/>
            <person name="White O."/>
            <person name="Clayton R.A."/>
            <person name="Kirkness E.F."/>
            <person name="Kerlavage A.R."/>
            <person name="Bult C.J."/>
            <person name="Tomb J.-F."/>
            <person name="Dougherty B.A."/>
            <person name="Merrick J.M."/>
            <person name="McKenney K."/>
            <person name="Sutton G.G."/>
            <person name="FitzHugh W."/>
            <person name="Fields C.A."/>
            <person name="Gocayne J.D."/>
            <person name="Scott J.D."/>
            <person name="Shirley R."/>
            <person name="Liu L.-I."/>
            <person name="Glodek A."/>
            <person name="Kelley J.M."/>
            <person name="Weidman J.F."/>
            <person name="Phillips C.A."/>
            <person name="Spriggs T."/>
            <person name="Hedblom E."/>
            <person name="Cotton M.D."/>
            <person name="Utterback T.R."/>
            <person name="Hanna M.C."/>
            <person name="Nguyen D.T."/>
            <person name="Saudek D.M."/>
            <person name="Brandon R.C."/>
            <person name="Fine L.D."/>
            <person name="Fritchman J.L."/>
            <person name="Fuhrmann J.L."/>
            <person name="Geoghagen N.S.M."/>
            <person name="Gnehm C.L."/>
            <person name="McDonald L.A."/>
            <person name="Small K.V."/>
            <person name="Fraser C.M."/>
            <person name="Smith H.O."/>
            <person name="Venter J.C."/>
        </authorList>
    </citation>
    <scope>NUCLEOTIDE SEQUENCE [LARGE SCALE GENOMIC DNA]</scope>
    <source>
        <strain>ATCC 51907 / DSM 11121 / KW20 / Rd</strain>
    </source>
</reference>
<reference key="2">
    <citation type="submission" date="1998-05" db="EMBL/GenBank/DDBJ databases">
        <authorList>
            <person name="White O."/>
            <person name="Clayton R.A."/>
            <person name="Kerlavage A.R."/>
            <person name="Fleischmann R.D."/>
            <person name="Peterson J."/>
            <person name="Hickey E."/>
            <person name="Dodson R."/>
            <person name="Gwinn M."/>
        </authorList>
    </citation>
    <scope>IDENTIFICATION</scope>
</reference>
<gene>
    <name type="ordered locus">HI_1564.1</name>
</gene>